<proteinExistence type="evidence at transcript level"/>
<comment type="function">
    <text evidence="1">Component of the CENPA-CAD (nucleosome distal) complex, a complex recruited to centromeres which is involved in assembly of kinetochore proteins, mitotic progression and chromosome segregation. May be involved in incorporation of newly synthesized CENPA into centromeres via its interaction with the CENPA-NAC complex. Required for the localization of CENPF, MAD1L1 and MAD2 (MAD2L1 or MAD2L2) to kinetochores. Involved in the response of gonadal tissues to follicle-stimulating hormone (By similarity).</text>
</comment>
<comment type="subunit">
    <text evidence="1">Component of the CENPA-CAD complex, composed of CENPI, CENPK, CENPL, CENPO, CENPP, CENPQ, CENPR and CENPS. The CENPA-CAD complex interacts with the CENPA-NAC complex, at least composed of CENPA, CENPC, CENPH, CENPM, CENPN, CENPT and CENPU. Interacts with SENP6 (By similarity).</text>
</comment>
<comment type="subcellular location">
    <subcellularLocation>
        <location evidence="1">Nucleus</location>
    </subcellularLocation>
    <subcellularLocation>
        <location evidence="1">Chromosome</location>
        <location evidence="1">Centromere</location>
    </subcellularLocation>
    <text evidence="1">Localizes exclusively in the centromeres. The CENPA-CAD complex is probably recruited on centromeres by the CENPA-NAC complex (By similarity).</text>
</comment>
<comment type="tissue specificity">
    <text>Highly expressed in testis, ovary and spleen. A much lower mRNA level is found in brain and lung, and no expression is detected in liver, kidney, heart, muscle, pituitary gland, prostate, epididymis and seminal vesicle.</text>
</comment>
<comment type="induction">
    <text>By follicle-stimulating hormone (FSH).</text>
</comment>
<comment type="PTM">
    <text evidence="1">Sumoylated. Sumoylated form can be polyubiquitinated by RNF4, leading to its degradation. Desumoylation by SENP6 prevents its degradation (By similarity).</text>
</comment>
<comment type="similarity">
    <text evidence="3">Belongs to the CENP-I/CTF3 family.</text>
</comment>
<feature type="chain" id="PRO_0000087356" description="Centromere protein I">
    <location>
        <begin position="1"/>
        <end position="745"/>
    </location>
</feature>
<feature type="region of interest" description="Disordered" evidence="2">
    <location>
        <begin position="1"/>
        <end position="58"/>
    </location>
</feature>
<feature type="compositionally biased region" description="Polar residues" evidence="2">
    <location>
        <begin position="1"/>
        <end position="27"/>
    </location>
</feature>
<feature type="compositionally biased region" description="Low complexity" evidence="2">
    <location>
        <begin position="39"/>
        <end position="50"/>
    </location>
</feature>
<name>CENPI_RAT</name>
<evidence type="ECO:0000250" key="1"/>
<evidence type="ECO:0000256" key="2">
    <source>
        <dbReference type="SAM" id="MobiDB-lite"/>
    </source>
</evidence>
<evidence type="ECO:0000305" key="3"/>
<dbReference type="EMBL" id="X90355">
    <property type="protein sequence ID" value="CAA62018.1"/>
    <property type="molecule type" value="mRNA"/>
</dbReference>
<dbReference type="PIR" id="I57665">
    <property type="entry name" value="I57665"/>
</dbReference>
<dbReference type="RefSeq" id="NP_037087.1">
    <property type="nucleotide sequence ID" value="NM_012955.1"/>
</dbReference>
<dbReference type="SMR" id="Q63517"/>
<dbReference type="FunCoup" id="Q63517">
    <property type="interactions" value="1601"/>
</dbReference>
<dbReference type="STRING" id="10116.ENSRNOP00000041317"/>
<dbReference type="GlyGen" id="Q63517">
    <property type="glycosylation" value="1 site"/>
</dbReference>
<dbReference type="PhosphoSitePlus" id="Q63517"/>
<dbReference type="PaxDb" id="10116-ENSRNOP00000041317"/>
<dbReference type="GeneID" id="25448"/>
<dbReference type="KEGG" id="rno:25448"/>
<dbReference type="UCSC" id="RGD:2631">
    <property type="organism name" value="rat"/>
</dbReference>
<dbReference type="AGR" id="RGD:2631"/>
<dbReference type="CTD" id="2491"/>
<dbReference type="RGD" id="2631">
    <property type="gene designation" value="Cenpi"/>
</dbReference>
<dbReference type="eggNOG" id="ENOG502QU9H">
    <property type="taxonomic scope" value="Eukaryota"/>
</dbReference>
<dbReference type="InParanoid" id="Q63517"/>
<dbReference type="OrthoDB" id="6347512at2759"/>
<dbReference type="PhylomeDB" id="Q63517"/>
<dbReference type="Reactome" id="R-RNO-141444">
    <property type="pathway name" value="Amplification of signal from unattached kinetochores via a MAD2 inhibitory signal"/>
</dbReference>
<dbReference type="Reactome" id="R-RNO-2467813">
    <property type="pathway name" value="Separation of Sister Chromatids"/>
</dbReference>
<dbReference type="Reactome" id="R-RNO-2500257">
    <property type="pathway name" value="Resolution of Sister Chromatid Cohesion"/>
</dbReference>
<dbReference type="Reactome" id="R-RNO-5663220">
    <property type="pathway name" value="RHO GTPases Activate Formins"/>
</dbReference>
<dbReference type="Reactome" id="R-RNO-606279">
    <property type="pathway name" value="Deposition of new CENPA-containing nucleosomes at the centromere"/>
</dbReference>
<dbReference type="Reactome" id="R-RNO-68877">
    <property type="pathway name" value="Mitotic Prometaphase"/>
</dbReference>
<dbReference type="Reactome" id="R-RNO-9648025">
    <property type="pathway name" value="EML4 and NUDC in mitotic spindle formation"/>
</dbReference>
<dbReference type="PRO" id="PR:Q63517"/>
<dbReference type="Proteomes" id="UP000002494">
    <property type="component" value="Unplaced"/>
</dbReference>
<dbReference type="GO" id="GO:0000939">
    <property type="term" value="C:inner kinetochore"/>
    <property type="evidence" value="ECO:0000266"/>
    <property type="project" value="RGD"/>
</dbReference>
<dbReference type="GO" id="GO:0000776">
    <property type="term" value="C:kinetochore"/>
    <property type="evidence" value="ECO:0000266"/>
    <property type="project" value="RGD"/>
</dbReference>
<dbReference type="GO" id="GO:0005634">
    <property type="term" value="C:nucleus"/>
    <property type="evidence" value="ECO:0007669"/>
    <property type="project" value="UniProtKB-SubCell"/>
</dbReference>
<dbReference type="GO" id="GO:0034080">
    <property type="term" value="P:CENP-A containing chromatin assembly"/>
    <property type="evidence" value="ECO:0000318"/>
    <property type="project" value="GO_Central"/>
</dbReference>
<dbReference type="GO" id="GO:0042699">
    <property type="term" value="P:follicle-stimulating hormone signaling pathway"/>
    <property type="evidence" value="ECO:0000270"/>
    <property type="project" value="RGD"/>
</dbReference>
<dbReference type="GO" id="GO:0000070">
    <property type="term" value="P:mitotic sister chromatid segregation"/>
    <property type="evidence" value="ECO:0000318"/>
    <property type="project" value="GO_Central"/>
</dbReference>
<dbReference type="InterPro" id="IPR012485">
    <property type="entry name" value="CENP-I"/>
</dbReference>
<dbReference type="PANTHER" id="PTHR48208">
    <property type="entry name" value="CENTROMERE PROTEIN I"/>
    <property type="match status" value="1"/>
</dbReference>
<dbReference type="PANTHER" id="PTHR48208:SF2">
    <property type="entry name" value="CENTROMERE PROTEIN I"/>
    <property type="match status" value="1"/>
</dbReference>
<dbReference type="Pfam" id="PF07778">
    <property type="entry name" value="CENP-I"/>
    <property type="match status" value="1"/>
</dbReference>
<accession>Q63517</accession>
<reference key="1">
    <citation type="journal article" date="1995" name="Mol. Cell. Endocrinol.">
        <title>Regulation of gene expression in Sertoli cells by follicle-stimulating hormone (FSH): cloning and characterization of LRPR1, a primary response gene encoding a leucine-rich protein.</title>
        <authorList>
            <person name="Slegtenhorst-Eegdeman K.E."/>
            <person name="Post M."/>
            <person name="Baarends W.M."/>
            <person name="Themmen A.P.M."/>
            <person name="Grootegoed J.A."/>
        </authorList>
    </citation>
    <scope>NUCLEOTIDE SEQUENCE [MRNA]</scope>
    <source>
        <strain>Wistar</strain>
        <tissue>Testis</tissue>
    </source>
</reference>
<sequence length="745" mass="85651">MATPRLTRNSQQQNRISQGSNSRQTTLLDWKVKDKAGNSKSVLEESSSLEDSNHADDQTEDALQTAVEYFQKGPKKASLSKDSVLEKHLKTVENVAWNNGLAPEAIDILLNVALSGKFGNALSTRILKCMIPETHISEDSVVKAVSWLCVGKCSGNTKVLFYRWLVAMFDFIDHKKQINSLYGFFFVSLQDDTLCPYVCHLLYLLTKKENVKPFRARKLLDLQAKMGMQPHLQALLSLYKFFAPTLISVSLPVRKKIFFNNSKNLWTPALLAVKLRNQGIFPEPLKLQLGPTSGRSLKRKWNYHSVIPAVNSAKKECREKMSLFDYLSNDRSLPVEQLQSFPQLLENIHCLELPSQMSSVLNSSLLLHYVNCVKDESILLRLSYWLSQTLQEECVWYNMNDYQQEKEFINFLDMVIRVQCFLQEGFYSCEAFLYKSLPLWDGFSCRSQFLKLLAWIPFSSFSEIKPLLLDHLAPLFFTSSIYFKCSLLQCLKDLLQNWLLWLSTEAQVQPMTDSPLETTLGGSMDSVSQLIEYIGWLSMVAIRLESSSTLLVHFILDFYEKVCDIYINYDLPLVVLFPPVVFHSAFLSLDATILNQLCYIMYRYRDNLTAAKKKDLVQKAKSEFSISSKICKEFNYYLTALVHCLWSSRPFETGVYIDPQIIENTGETQYKHNLNFVHHPCLLNYAASFLLQESPEEMPVHLSSIRGKKWNWYLDHLYSEGFQGLNLFIKSSIDHSSVSKTEKNT</sequence>
<keyword id="KW-0137">Centromere</keyword>
<keyword id="KW-0158">Chromosome</keyword>
<keyword id="KW-0539">Nucleus</keyword>
<keyword id="KW-1185">Reference proteome</keyword>
<keyword id="KW-0832">Ubl conjugation</keyword>
<organism>
    <name type="scientific">Rattus norvegicus</name>
    <name type="common">Rat</name>
    <dbReference type="NCBI Taxonomy" id="10116"/>
    <lineage>
        <taxon>Eukaryota</taxon>
        <taxon>Metazoa</taxon>
        <taxon>Chordata</taxon>
        <taxon>Craniata</taxon>
        <taxon>Vertebrata</taxon>
        <taxon>Euteleostomi</taxon>
        <taxon>Mammalia</taxon>
        <taxon>Eutheria</taxon>
        <taxon>Euarchontoglires</taxon>
        <taxon>Glires</taxon>
        <taxon>Rodentia</taxon>
        <taxon>Myomorpha</taxon>
        <taxon>Muroidea</taxon>
        <taxon>Muridae</taxon>
        <taxon>Murinae</taxon>
        <taxon>Rattus</taxon>
    </lineage>
</organism>
<protein>
    <recommendedName>
        <fullName>Centromere protein I</fullName>
        <shortName>CENP-I</shortName>
    </recommendedName>
    <alternativeName>
        <fullName>FSH primary response protein 1</fullName>
    </alternativeName>
    <alternativeName>
        <fullName>Follicle-stimulating hormone primary response protein</fullName>
    </alternativeName>
    <alternativeName>
        <fullName>Leucine-rich primary response protein 1</fullName>
    </alternativeName>
</protein>
<gene>
    <name type="primary">Cenpi</name>
    <name type="synonym">Fshprh1</name>
    <name type="synonym">Lrpr1</name>
</gene>